<proteinExistence type="inferred from homology"/>
<protein>
    <recommendedName>
        <fullName evidence="1">Cell division protein FtsZ 1</fullName>
    </recommendedName>
</protein>
<feature type="chain" id="PRO_0000114407" description="Cell division protein FtsZ 1">
    <location>
        <begin position="1"/>
        <end position="373"/>
    </location>
</feature>
<feature type="region of interest" description="Disordered" evidence="2">
    <location>
        <begin position="354"/>
        <end position="373"/>
    </location>
</feature>
<feature type="compositionally biased region" description="Basic and acidic residues" evidence="2">
    <location>
        <begin position="360"/>
        <end position="373"/>
    </location>
</feature>
<feature type="binding site" evidence="1">
    <location>
        <begin position="51"/>
        <end position="55"/>
    </location>
    <ligand>
        <name>GTP</name>
        <dbReference type="ChEBI" id="CHEBI:37565"/>
    </ligand>
</feature>
<feature type="binding site" evidence="1">
    <location>
        <begin position="138"/>
        <end position="140"/>
    </location>
    <ligand>
        <name>GTP</name>
        <dbReference type="ChEBI" id="CHEBI:37565"/>
    </ligand>
</feature>
<feature type="binding site" evidence="1">
    <location>
        <position position="169"/>
    </location>
    <ligand>
        <name>GTP</name>
        <dbReference type="ChEBI" id="CHEBI:37565"/>
    </ligand>
</feature>
<feature type="binding site" evidence="1">
    <location>
        <position position="173"/>
    </location>
    <ligand>
        <name>GTP</name>
        <dbReference type="ChEBI" id="CHEBI:37565"/>
    </ligand>
</feature>
<feature type="binding site" evidence="1">
    <location>
        <position position="216"/>
    </location>
    <ligand>
        <name>GTP</name>
        <dbReference type="ChEBI" id="CHEBI:37565"/>
    </ligand>
</feature>
<dbReference type="EMBL" id="AP006878">
    <property type="protein sequence ID" value="BAD85610.1"/>
    <property type="molecule type" value="Genomic_DNA"/>
</dbReference>
<dbReference type="RefSeq" id="WP_011250372.1">
    <property type="nucleotide sequence ID" value="NC_006624.1"/>
</dbReference>
<dbReference type="SMR" id="Q5JH31"/>
<dbReference type="FunCoup" id="Q5JH31">
    <property type="interactions" value="58"/>
</dbReference>
<dbReference type="STRING" id="69014.TK1421"/>
<dbReference type="EnsemblBacteria" id="BAD85610">
    <property type="protein sequence ID" value="BAD85610"/>
    <property type="gene ID" value="TK1421"/>
</dbReference>
<dbReference type="GeneID" id="78447942"/>
<dbReference type="KEGG" id="tko:TK1421"/>
<dbReference type="PATRIC" id="fig|69014.16.peg.1383"/>
<dbReference type="eggNOG" id="arCOG02201">
    <property type="taxonomic scope" value="Archaea"/>
</dbReference>
<dbReference type="HOGENOM" id="CLU_024865_0_1_2"/>
<dbReference type="InParanoid" id="Q5JH31"/>
<dbReference type="OrthoDB" id="371908at2157"/>
<dbReference type="PhylomeDB" id="Q5JH31"/>
<dbReference type="Proteomes" id="UP000000536">
    <property type="component" value="Chromosome"/>
</dbReference>
<dbReference type="GO" id="GO:0032153">
    <property type="term" value="C:cell division site"/>
    <property type="evidence" value="ECO:0000318"/>
    <property type="project" value="GO_Central"/>
</dbReference>
<dbReference type="GO" id="GO:0005737">
    <property type="term" value="C:cytoplasm"/>
    <property type="evidence" value="ECO:0000318"/>
    <property type="project" value="GO_Central"/>
</dbReference>
<dbReference type="GO" id="GO:0005525">
    <property type="term" value="F:GTP binding"/>
    <property type="evidence" value="ECO:0000318"/>
    <property type="project" value="GO_Central"/>
</dbReference>
<dbReference type="GO" id="GO:0003924">
    <property type="term" value="F:GTPase activity"/>
    <property type="evidence" value="ECO:0000318"/>
    <property type="project" value="GO_Central"/>
</dbReference>
<dbReference type="GO" id="GO:0051301">
    <property type="term" value="P:cell division"/>
    <property type="evidence" value="ECO:0000318"/>
    <property type="project" value="GO_Central"/>
</dbReference>
<dbReference type="GO" id="GO:0043093">
    <property type="term" value="P:FtsZ-dependent cytokinesis"/>
    <property type="evidence" value="ECO:0007669"/>
    <property type="project" value="UniProtKB-UniRule"/>
</dbReference>
<dbReference type="GO" id="GO:0051258">
    <property type="term" value="P:protein polymerization"/>
    <property type="evidence" value="ECO:0007669"/>
    <property type="project" value="UniProtKB-UniRule"/>
</dbReference>
<dbReference type="CDD" id="cd02201">
    <property type="entry name" value="FtsZ_type1"/>
    <property type="match status" value="1"/>
</dbReference>
<dbReference type="FunFam" id="3.30.1330.20:FF:000008">
    <property type="entry name" value="Cell division protein FtsZ"/>
    <property type="match status" value="1"/>
</dbReference>
<dbReference type="FunFam" id="3.40.50.1440:FF:000023">
    <property type="entry name" value="Cell division protein FtsZ"/>
    <property type="match status" value="1"/>
</dbReference>
<dbReference type="Gene3D" id="3.30.1330.20">
    <property type="entry name" value="Tubulin/FtsZ, C-terminal domain"/>
    <property type="match status" value="1"/>
</dbReference>
<dbReference type="Gene3D" id="3.40.50.1440">
    <property type="entry name" value="Tubulin/FtsZ, GTPase domain"/>
    <property type="match status" value="1"/>
</dbReference>
<dbReference type="HAMAP" id="MF_00909">
    <property type="entry name" value="FtsZ"/>
    <property type="match status" value="1"/>
</dbReference>
<dbReference type="InterPro" id="IPR000158">
    <property type="entry name" value="Cell_div_FtsZ"/>
</dbReference>
<dbReference type="InterPro" id="IPR020805">
    <property type="entry name" value="Cell_div_FtsZ_CS"/>
</dbReference>
<dbReference type="InterPro" id="IPR045061">
    <property type="entry name" value="FtsZ/CetZ"/>
</dbReference>
<dbReference type="InterPro" id="IPR024757">
    <property type="entry name" value="FtsZ_C"/>
</dbReference>
<dbReference type="InterPro" id="IPR008280">
    <property type="entry name" value="Tub_FtsZ_C"/>
</dbReference>
<dbReference type="InterPro" id="IPR037103">
    <property type="entry name" value="Tubulin/FtsZ-like_C"/>
</dbReference>
<dbReference type="InterPro" id="IPR018316">
    <property type="entry name" value="Tubulin/FtsZ_2-layer-sand-dom"/>
</dbReference>
<dbReference type="InterPro" id="IPR036525">
    <property type="entry name" value="Tubulin/FtsZ_GTPase_sf"/>
</dbReference>
<dbReference type="InterPro" id="IPR003008">
    <property type="entry name" value="Tubulin_FtsZ_GTPase"/>
</dbReference>
<dbReference type="NCBIfam" id="TIGR00065">
    <property type="entry name" value="ftsZ"/>
    <property type="match status" value="1"/>
</dbReference>
<dbReference type="PANTHER" id="PTHR30314">
    <property type="entry name" value="CELL DIVISION PROTEIN FTSZ-RELATED"/>
    <property type="match status" value="1"/>
</dbReference>
<dbReference type="PANTHER" id="PTHR30314:SF3">
    <property type="entry name" value="MITOCHONDRIAL DIVISION PROTEIN FSZA"/>
    <property type="match status" value="1"/>
</dbReference>
<dbReference type="Pfam" id="PF12327">
    <property type="entry name" value="FtsZ_C"/>
    <property type="match status" value="1"/>
</dbReference>
<dbReference type="Pfam" id="PF00091">
    <property type="entry name" value="Tubulin"/>
    <property type="match status" value="1"/>
</dbReference>
<dbReference type="PRINTS" id="PR00423">
    <property type="entry name" value="CELLDVISFTSZ"/>
</dbReference>
<dbReference type="SMART" id="SM00864">
    <property type="entry name" value="Tubulin"/>
    <property type="match status" value="1"/>
</dbReference>
<dbReference type="SMART" id="SM00865">
    <property type="entry name" value="Tubulin_C"/>
    <property type="match status" value="1"/>
</dbReference>
<dbReference type="SUPFAM" id="SSF55307">
    <property type="entry name" value="Tubulin C-terminal domain-like"/>
    <property type="match status" value="1"/>
</dbReference>
<dbReference type="SUPFAM" id="SSF52490">
    <property type="entry name" value="Tubulin nucleotide-binding domain-like"/>
    <property type="match status" value="1"/>
</dbReference>
<dbReference type="PROSITE" id="PS01134">
    <property type="entry name" value="FTSZ_1"/>
    <property type="match status" value="1"/>
</dbReference>
<dbReference type="PROSITE" id="PS01135">
    <property type="entry name" value="FTSZ_2"/>
    <property type="match status" value="1"/>
</dbReference>
<accession>Q5JH31</accession>
<comment type="function">
    <text evidence="1">Essential cell division protein that forms a contractile ring structure (Z ring) at the future cell division site. The regulation of the ring assembly controls the timing and the location of cell division. One of the functions of the FtsZ ring is to recruit other cell division proteins to the septum to produce a new cell wall between the dividing cells. Binds GTP and shows GTPase activity.</text>
</comment>
<comment type="subunit">
    <text evidence="1">Homodimer. Polymerizes to form a dynamic ring structure in a strictly GTP-dependent manner. Interacts directly with several other division proteins.</text>
</comment>
<comment type="subcellular location">
    <subcellularLocation>
        <location evidence="1">Cytoplasm</location>
    </subcellularLocation>
    <text evidence="1">Assembles at midcell at the inner surface of the cytoplasmic membrane.</text>
</comment>
<comment type="similarity">
    <text evidence="1">Belongs to the FtsZ family.</text>
</comment>
<gene>
    <name evidence="1" type="primary">ftsZ1</name>
    <name type="ordered locus">TK1421</name>
</gene>
<sequence length="373" mass="40056">MLKLIEDAIERTSAAPQASAPEVRTQSDIDEELKKLLEQIQAKIYVVGVGGAGCNTINRMMQVGIQGAKIIAMNTDAQDLLKVRAHKKILLGKELTRGLGAGNNPKIGEEAAKESEREIREALEGADMVFITCGLGGGTGTGAAPVVAEIAKKMGALTVAVVTLPFTVEGIRRIKNAEYGLERLKKNTDTVIVIPNDKLMEVAPNLPIHMAFKVADEILVQAVKGITELITKPGLVNLDFNDVRAVMKDGGVAMIGIGESDSEKRALEAAQQALNSPLLDVDISGAKGALISISGSDVKLEEAQQIIELVTSKLDPEAQVIWGIQLDEELGKMIRILLVVTGVSSPYSVAEEEEESYFGEEERRPIKLDLDEL</sequence>
<organism>
    <name type="scientific">Thermococcus kodakarensis (strain ATCC BAA-918 / JCM 12380 / KOD1)</name>
    <name type="common">Pyrococcus kodakaraensis (strain KOD1)</name>
    <dbReference type="NCBI Taxonomy" id="69014"/>
    <lineage>
        <taxon>Archaea</taxon>
        <taxon>Methanobacteriati</taxon>
        <taxon>Methanobacteriota</taxon>
        <taxon>Thermococci</taxon>
        <taxon>Thermococcales</taxon>
        <taxon>Thermococcaceae</taxon>
        <taxon>Thermococcus</taxon>
    </lineage>
</organism>
<evidence type="ECO:0000255" key="1">
    <source>
        <dbReference type="HAMAP-Rule" id="MF_00909"/>
    </source>
</evidence>
<evidence type="ECO:0000256" key="2">
    <source>
        <dbReference type="SAM" id="MobiDB-lite"/>
    </source>
</evidence>
<name>FTSZ1_THEKO</name>
<keyword id="KW-0131">Cell cycle</keyword>
<keyword id="KW-0132">Cell division</keyword>
<keyword id="KW-0963">Cytoplasm</keyword>
<keyword id="KW-0342">GTP-binding</keyword>
<keyword id="KW-0547">Nucleotide-binding</keyword>
<keyword id="KW-1185">Reference proteome</keyword>
<keyword id="KW-0717">Septation</keyword>
<reference key="1">
    <citation type="journal article" date="2005" name="Genome Res.">
        <title>Complete genome sequence of the hyperthermophilic archaeon Thermococcus kodakaraensis KOD1 and comparison with Pyrococcus genomes.</title>
        <authorList>
            <person name="Fukui T."/>
            <person name="Atomi H."/>
            <person name="Kanai T."/>
            <person name="Matsumi R."/>
            <person name="Fujiwara S."/>
            <person name="Imanaka T."/>
        </authorList>
    </citation>
    <scope>NUCLEOTIDE SEQUENCE [LARGE SCALE GENOMIC DNA]</scope>
    <source>
        <strain>ATCC BAA-918 / JCM 12380 / KOD1</strain>
    </source>
</reference>